<comment type="function">
    <text evidence="1">Catalyzes the methyl esterification of L-isoaspartyl residues in peptides and proteins that result from spontaneous decomposition of normal L-aspartyl and L-asparaginyl residues. It plays a role in the repair and/or degradation of damaged proteins.</text>
</comment>
<comment type="catalytic activity">
    <reaction evidence="1">
        <text>[protein]-L-isoaspartate + S-adenosyl-L-methionine = [protein]-L-isoaspartate alpha-methyl ester + S-adenosyl-L-homocysteine</text>
        <dbReference type="Rhea" id="RHEA:12705"/>
        <dbReference type="Rhea" id="RHEA-COMP:12143"/>
        <dbReference type="Rhea" id="RHEA-COMP:12144"/>
        <dbReference type="ChEBI" id="CHEBI:57856"/>
        <dbReference type="ChEBI" id="CHEBI:59789"/>
        <dbReference type="ChEBI" id="CHEBI:90596"/>
        <dbReference type="ChEBI" id="CHEBI:90598"/>
        <dbReference type="EC" id="2.1.1.77"/>
    </reaction>
</comment>
<comment type="subcellular location">
    <subcellularLocation>
        <location evidence="1">Cytoplasm</location>
    </subcellularLocation>
</comment>
<comment type="similarity">
    <text evidence="1">Belongs to the methyltransferase superfamily. L-isoaspartyl/D-aspartyl protein methyltransferase family.</text>
</comment>
<proteinExistence type="inferred from homology"/>
<gene>
    <name evidence="1" type="primary">pcm</name>
    <name type="ordered locus">Sbal_3121</name>
</gene>
<dbReference type="EC" id="2.1.1.77" evidence="1"/>
<dbReference type="EMBL" id="CP000563">
    <property type="protein sequence ID" value="ABN62602.1"/>
    <property type="molecule type" value="Genomic_DNA"/>
</dbReference>
<dbReference type="RefSeq" id="WP_006082610.1">
    <property type="nucleotide sequence ID" value="NC_009052.1"/>
</dbReference>
<dbReference type="SMR" id="A3D789"/>
<dbReference type="STRING" id="325240.Sbal_3121"/>
<dbReference type="KEGG" id="sbl:Sbal_3121"/>
<dbReference type="HOGENOM" id="CLU_055432_2_0_6"/>
<dbReference type="OrthoDB" id="9810066at2"/>
<dbReference type="Proteomes" id="UP000001557">
    <property type="component" value="Chromosome"/>
</dbReference>
<dbReference type="GO" id="GO:0005737">
    <property type="term" value="C:cytoplasm"/>
    <property type="evidence" value="ECO:0007669"/>
    <property type="project" value="UniProtKB-SubCell"/>
</dbReference>
<dbReference type="GO" id="GO:0004719">
    <property type="term" value="F:protein-L-isoaspartate (D-aspartate) O-methyltransferase activity"/>
    <property type="evidence" value="ECO:0007669"/>
    <property type="project" value="UniProtKB-UniRule"/>
</dbReference>
<dbReference type="GO" id="GO:0032259">
    <property type="term" value="P:methylation"/>
    <property type="evidence" value="ECO:0007669"/>
    <property type="project" value="UniProtKB-KW"/>
</dbReference>
<dbReference type="GO" id="GO:0036211">
    <property type="term" value="P:protein modification process"/>
    <property type="evidence" value="ECO:0007669"/>
    <property type="project" value="UniProtKB-UniRule"/>
</dbReference>
<dbReference type="GO" id="GO:0030091">
    <property type="term" value="P:protein repair"/>
    <property type="evidence" value="ECO:0007669"/>
    <property type="project" value="UniProtKB-UniRule"/>
</dbReference>
<dbReference type="CDD" id="cd02440">
    <property type="entry name" value="AdoMet_MTases"/>
    <property type="match status" value="1"/>
</dbReference>
<dbReference type="FunFam" id="3.40.50.150:FF:000010">
    <property type="entry name" value="Protein-L-isoaspartate O-methyltransferase"/>
    <property type="match status" value="1"/>
</dbReference>
<dbReference type="Gene3D" id="3.40.50.150">
    <property type="entry name" value="Vaccinia Virus protein VP39"/>
    <property type="match status" value="1"/>
</dbReference>
<dbReference type="HAMAP" id="MF_00090">
    <property type="entry name" value="PIMT"/>
    <property type="match status" value="1"/>
</dbReference>
<dbReference type="InterPro" id="IPR000682">
    <property type="entry name" value="PCMT"/>
</dbReference>
<dbReference type="InterPro" id="IPR029063">
    <property type="entry name" value="SAM-dependent_MTases_sf"/>
</dbReference>
<dbReference type="NCBIfam" id="TIGR00080">
    <property type="entry name" value="pimt"/>
    <property type="match status" value="1"/>
</dbReference>
<dbReference type="NCBIfam" id="NF001453">
    <property type="entry name" value="PRK00312.1"/>
    <property type="match status" value="1"/>
</dbReference>
<dbReference type="PANTHER" id="PTHR11579">
    <property type="entry name" value="PROTEIN-L-ISOASPARTATE O-METHYLTRANSFERASE"/>
    <property type="match status" value="1"/>
</dbReference>
<dbReference type="PANTHER" id="PTHR11579:SF0">
    <property type="entry name" value="PROTEIN-L-ISOASPARTATE(D-ASPARTATE) O-METHYLTRANSFERASE"/>
    <property type="match status" value="1"/>
</dbReference>
<dbReference type="Pfam" id="PF01135">
    <property type="entry name" value="PCMT"/>
    <property type="match status" value="1"/>
</dbReference>
<dbReference type="SUPFAM" id="SSF53335">
    <property type="entry name" value="S-adenosyl-L-methionine-dependent methyltransferases"/>
    <property type="match status" value="1"/>
</dbReference>
<dbReference type="PROSITE" id="PS01279">
    <property type="entry name" value="PCMT"/>
    <property type="match status" value="1"/>
</dbReference>
<name>PIMT_SHEB5</name>
<sequence length="211" mass="23151">MTRVALTSAVNLAKKLHDAGIRNQAVLKAISHTPREMFLDNALAHKAYENTALPIGQGQTISQPYIVARMTELLLHKMPQRVLEVGTGSGYQAAILAQLVPQLCTIERIKGLQIQARQRLKRLDLHNVSFKYGDGWLGWANRSPFDAIMVTAAASTIPEALLSQLAEGGVLVLPVGEDTQQLMRITRTADRFSSETIETVKFVPLINGELA</sequence>
<evidence type="ECO:0000255" key="1">
    <source>
        <dbReference type="HAMAP-Rule" id="MF_00090"/>
    </source>
</evidence>
<organism>
    <name type="scientific">Shewanella baltica (strain OS155 / ATCC BAA-1091)</name>
    <dbReference type="NCBI Taxonomy" id="325240"/>
    <lineage>
        <taxon>Bacteria</taxon>
        <taxon>Pseudomonadati</taxon>
        <taxon>Pseudomonadota</taxon>
        <taxon>Gammaproteobacteria</taxon>
        <taxon>Alteromonadales</taxon>
        <taxon>Shewanellaceae</taxon>
        <taxon>Shewanella</taxon>
    </lineage>
</organism>
<reference key="1">
    <citation type="submission" date="2007-02" db="EMBL/GenBank/DDBJ databases">
        <title>Complete sequence of chromosome of Shewanella baltica OS155.</title>
        <authorList>
            <consortium name="US DOE Joint Genome Institute"/>
            <person name="Copeland A."/>
            <person name="Lucas S."/>
            <person name="Lapidus A."/>
            <person name="Barry K."/>
            <person name="Detter J.C."/>
            <person name="Glavina del Rio T."/>
            <person name="Hammon N."/>
            <person name="Israni S."/>
            <person name="Dalin E."/>
            <person name="Tice H."/>
            <person name="Pitluck S."/>
            <person name="Sims D.R."/>
            <person name="Brettin T."/>
            <person name="Bruce D."/>
            <person name="Han C."/>
            <person name="Tapia R."/>
            <person name="Brainard J."/>
            <person name="Schmutz J."/>
            <person name="Larimer F."/>
            <person name="Land M."/>
            <person name="Hauser L."/>
            <person name="Kyrpides N."/>
            <person name="Mikhailova N."/>
            <person name="Brettar I."/>
            <person name="Klappenbach J."/>
            <person name="Konstantinidis K."/>
            <person name="Rodrigues J."/>
            <person name="Tiedje J."/>
            <person name="Richardson P."/>
        </authorList>
    </citation>
    <scope>NUCLEOTIDE SEQUENCE [LARGE SCALE GENOMIC DNA]</scope>
    <source>
        <strain>OS155 / ATCC BAA-1091</strain>
    </source>
</reference>
<protein>
    <recommendedName>
        <fullName evidence="1">Protein-L-isoaspartate O-methyltransferase</fullName>
        <ecNumber evidence="1">2.1.1.77</ecNumber>
    </recommendedName>
    <alternativeName>
        <fullName evidence="1">L-isoaspartyl protein carboxyl methyltransferase</fullName>
    </alternativeName>
    <alternativeName>
        <fullName evidence="1">Protein L-isoaspartyl methyltransferase</fullName>
    </alternativeName>
    <alternativeName>
        <fullName evidence="1">Protein-beta-aspartate methyltransferase</fullName>
        <shortName evidence="1">PIMT</shortName>
    </alternativeName>
</protein>
<keyword id="KW-0963">Cytoplasm</keyword>
<keyword id="KW-0489">Methyltransferase</keyword>
<keyword id="KW-1185">Reference proteome</keyword>
<keyword id="KW-0949">S-adenosyl-L-methionine</keyword>
<keyword id="KW-0808">Transferase</keyword>
<accession>A3D789</accession>
<feature type="chain" id="PRO_1000093280" description="Protein-L-isoaspartate O-methyltransferase">
    <location>
        <begin position="1"/>
        <end position="211"/>
    </location>
</feature>
<feature type="active site" evidence="1">
    <location>
        <position position="62"/>
    </location>
</feature>